<organism>
    <name type="scientific">Lactobacillus gasseri (strain ATCC 33323 / DSM 20243 / BCRC 14619 / CIP 102991 / JCM 1131 / KCTC 3163 / NCIMB 11718 / NCTC 13722 / AM63)</name>
    <dbReference type="NCBI Taxonomy" id="324831"/>
    <lineage>
        <taxon>Bacteria</taxon>
        <taxon>Bacillati</taxon>
        <taxon>Bacillota</taxon>
        <taxon>Bacilli</taxon>
        <taxon>Lactobacillales</taxon>
        <taxon>Lactobacillaceae</taxon>
        <taxon>Lactobacillus</taxon>
    </lineage>
</organism>
<dbReference type="EC" id="3.6.5.3" evidence="2"/>
<dbReference type="EMBL" id="CP000413">
    <property type="protein sequence ID" value="ABJ60537.1"/>
    <property type="status" value="ALT_INIT"/>
    <property type="molecule type" value="Genomic_DNA"/>
</dbReference>
<dbReference type="RefSeq" id="WP_003648636.1">
    <property type="nucleotide sequence ID" value="NZ_WBMG01000002.1"/>
</dbReference>
<dbReference type="SMR" id="Q042T5"/>
<dbReference type="GeneID" id="29638506"/>
<dbReference type="KEGG" id="lga:LGAS_1168"/>
<dbReference type="HOGENOM" id="CLU_007265_0_0_9"/>
<dbReference type="BioCyc" id="LGAS324831:G1G6Y-1164-MONOMER"/>
<dbReference type="Proteomes" id="UP000000664">
    <property type="component" value="Chromosome"/>
</dbReference>
<dbReference type="GO" id="GO:0005829">
    <property type="term" value="C:cytosol"/>
    <property type="evidence" value="ECO:0007669"/>
    <property type="project" value="TreeGrafter"/>
</dbReference>
<dbReference type="GO" id="GO:0005525">
    <property type="term" value="F:GTP binding"/>
    <property type="evidence" value="ECO:0007669"/>
    <property type="project" value="UniProtKB-UniRule"/>
</dbReference>
<dbReference type="GO" id="GO:0003924">
    <property type="term" value="F:GTPase activity"/>
    <property type="evidence" value="ECO:0007669"/>
    <property type="project" value="InterPro"/>
</dbReference>
<dbReference type="GO" id="GO:0003746">
    <property type="term" value="F:translation elongation factor activity"/>
    <property type="evidence" value="ECO:0007669"/>
    <property type="project" value="UniProtKB-UniRule"/>
</dbReference>
<dbReference type="CDD" id="cd01884">
    <property type="entry name" value="EF_Tu"/>
    <property type="match status" value="1"/>
</dbReference>
<dbReference type="CDD" id="cd03697">
    <property type="entry name" value="EFTU_II"/>
    <property type="match status" value="1"/>
</dbReference>
<dbReference type="CDD" id="cd03707">
    <property type="entry name" value="EFTU_III"/>
    <property type="match status" value="1"/>
</dbReference>
<dbReference type="FunFam" id="2.40.30.10:FF:000001">
    <property type="entry name" value="Elongation factor Tu"/>
    <property type="match status" value="1"/>
</dbReference>
<dbReference type="FunFam" id="3.40.50.300:FF:000003">
    <property type="entry name" value="Elongation factor Tu"/>
    <property type="match status" value="1"/>
</dbReference>
<dbReference type="Gene3D" id="3.40.50.300">
    <property type="entry name" value="P-loop containing nucleotide triphosphate hydrolases"/>
    <property type="match status" value="1"/>
</dbReference>
<dbReference type="Gene3D" id="2.40.30.10">
    <property type="entry name" value="Translation factors"/>
    <property type="match status" value="2"/>
</dbReference>
<dbReference type="HAMAP" id="MF_00118_B">
    <property type="entry name" value="EF_Tu_B"/>
    <property type="match status" value="1"/>
</dbReference>
<dbReference type="InterPro" id="IPR041709">
    <property type="entry name" value="EF-Tu_GTP-bd"/>
</dbReference>
<dbReference type="InterPro" id="IPR050055">
    <property type="entry name" value="EF-Tu_GTPase"/>
</dbReference>
<dbReference type="InterPro" id="IPR004161">
    <property type="entry name" value="EFTu-like_2"/>
</dbReference>
<dbReference type="InterPro" id="IPR033720">
    <property type="entry name" value="EFTU_2"/>
</dbReference>
<dbReference type="InterPro" id="IPR031157">
    <property type="entry name" value="G_TR_CS"/>
</dbReference>
<dbReference type="InterPro" id="IPR027417">
    <property type="entry name" value="P-loop_NTPase"/>
</dbReference>
<dbReference type="InterPro" id="IPR005225">
    <property type="entry name" value="Small_GTP-bd"/>
</dbReference>
<dbReference type="InterPro" id="IPR000795">
    <property type="entry name" value="T_Tr_GTP-bd_dom"/>
</dbReference>
<dbReference type="InterPro" id="IPR009000">
    <property type="entry name" value="Transl_B-barrel_sf"/>
</dbReference>
<dbReference type="InterPro" id="IPR009001">
    <property type="entry name" value="Transl_elong_EF1A/Init_IF2_C"/>
</dbReference>
<dbReference type="InterPro" id="IPR004541">
    <property type="entry name" value="Transl_elong_EFTu/EF1A_bac/org"/>
</dbReference>
<dbReference type="InterPro" id="IPR004160">
    <property type="entry name" value="Transl_elong_EFTu/EF1A_C"/>
</dbReference>
<dbReference type="NCBIfam" id="TIGR00485">
    <property type="entry name" value="EF-Tu"/>
    <property type="match status" value="1"/>
</dbReference>
<dbReference type="NCBIfam" id="NF000766">
    <property type="entry name" value="PRK00049.1"/>
    <property type="match status" value="1"/>
</dbReference>
<dbReference type="NCBIfam" id="NF009372">
    <property type="entry name" value="PRK12735.1"/>
    <property type="match status" value="1"/>
</dbReference>
<dbReference type="NCBIfam" id="NF009373">
    <property type="entry name" value="PRK12736.1"/>
    <property type="match status" value="1"/>
</dbReference>
<dbReference type="NCBIfam" id="TIGR00231">
    <property type="entry name" value="small_GTP"/>
    <property type="match status" value="1"/>
</dbReference>
<dbReference type="PANTHER" id="PTHR43721:SF22">
    <property type="entry name" value="ELONGATION FACTOR TU, MITOCHONDRIAL"/>
    <property type="match status" value="1"/>
</dbReference>
<dbReference type="PANTHER" id="PTHR43721">
    <property type="entry name" value="ELONGATION FACTOR TU-RELATED"/>
    <property type="match status" value="1"/>
</dbReference>
<dbReference type="Pfam" id="PF00009">
    <property type="entry name" value="GTP_EFTU"/>
    <property type="match status" value="1"/>
</dbReference>
<dbReference type="Pfam" id="PF03144">
    <property type="entry name" value="GTP_EFTU_D2"/>
    <property type="match status" value="1"/>
</dbReference>
<dbReference type="Pfam" id="PF03143">
    <property type="entry name" value="GTP_EFTU_D3"/>
    <property type="match status" value="1"/>
</dbReference>
<dbReference type="PRINTS" id="PR00315">
    <property type="entry name" value="ELONGATNFCT"/>
</dbReference>
<dbReference type="SUPFAM" id="SSF50465">
    <property type="entry name" value="EF-Tu/eEF-1alpha/eIF2-gamma C-terminal domain"/>
    <property type="match status" value="1"/>
</dbReference>
<dbReference type="SUPFAM" id="SSF52540">
    <property type="entry name" value="P-loop containing nucleoside triphosphate hydrolases"/>
    <property type="match status" value="1"/>
</dbReference>
<dbReference type="SUPFAM" id="SSF50447">
    <property type="entry name" value="Translation proteins"/>
    <property type="match status" value="1"/>
</dbReference>
<dbReference type="PROSITE" id="PS00301">
    <property type="entry name" value="G_TR_1"/>
    <property type="match status" value="1"/>
</dbReference>
<dbReference type="PROSITE" id="PS51722">
    <property type="entry name" value="G_TR_2"/>
    <property type="match status" value="1"/>
</dbReference>
<name>EFTU_LACGA</name>
<evidence type="ECO:0000250" key="1"/>
<evidence type="ECO:0000255" key="2">
    <source>
        <dbReference type="HAMAP-Rule" id="MF_00118"/>
    </source>
</evidence>
<evidence type="ECO:0000305" key="3"/>
<feature type="chain" id="PRO_0000337416" description="Elongation factor Tu">
    <location>
        <begin position="1"/>
        <end position="396"/>
    </location>
</feature>
<feature type="domain" description="tr-type G">
    <location>
        <begin position="11"/>
        <end position="205"/>
    </location>
</feature>
<feature type="region of interest" description="G1" evidence="1">
    <location>
        <begin position="20"/>
        <end position="27"/>
    </location>
</feature>
<feature type="region of interest" description="G2" evidence="1">
    <location>
        <begin position="61"/>
        <end position="65"/>
    </location>
</feature>
<feature type="region of interest" description="G3" evidence="1">
    <location>
        <begin position="82"/>
        <end position="85"/>
    </location>
</feature>
<feature type="region of interest" description="G4" evidence="1">
    <location>
        <begin position="137"/>
        <end position="140"/>
    </location>
</feature>
<feature type="region of interest" description="G5" evidence="1">
    <location>
        <begin position="175"/>
        <end position="177"/>
    </location>
</feature>
<feature type="binding site" evidence="2">
    <location>
        <begin position="20"/>
        <end position="27"/>
    </location>
    <ligand>
        <name>GTP</name>
        <dbReference type="ChEBI" id="CHEBI:37565"/>
    </ligand>
</feature>
<feature type="binding site" evidence="2">
    <location>
        <position position="27"/>
    </location>
    <ligand>
        <name>Mg(2+)</name>
        <dbReference type="ChEBI" id="CHEBI:18420"/>
    </ligand>
</feature>
<feature type="binding site" evidence="2">
    <location>
        <begin position="82"/>
        <end position="86"/>
    </location>
    <ligand>
        <name>GTP</name>
        <dbReference type="ChEBI" id="CHEBI:37565"/>
    </ligand>
</feature>
<feature type="binding site" evidence="2">
    <location>
        <begin position="137"/>
        <end position="140"/>
    </location>
    <ligand>
        <name>GTP</name>
        <dbReference type="ChEBI" id="CHEBI:37565"/>
    </ligand>
</feature>
<sequence>MAEKEHYERTKPHVNIGTIGHVDHGKTTLTAAITTVLAEDGLAQAEDYSQIDAAPEEKERGITINTAHVEYETKNRHYAHMDAPGHADYIKNMITGAAQMDGAILVVAATDGPMPQTREHILLARQVGVKYIVVFLNKVDLVDDPELIDLVEMEVRDLLTEYDYPGDDVPVIRGSALKALQGDPEQQDVIRKLMETVDEYIPTPERDTDKPFLMPVEDVFTITGRGTVASGRIDRGTVKVGDEVEIVGLTDKVEKSTVTGLEMFHKTLDLGEAGDNVGVLLRGIDRDQVERGQVLAAPGSIQTHKKFKGQVYILNKDEGGRHTPFFSDYRPQFYFHTTDVTGKIELPEGTEMVMPGDNVEFTVELIKPVAIEKGTKFTIREGGKTVGAGQVTEILD</sequence>
<proteinExistence type="inferred from homology"/>
<gene>
    <name evidence="2" type="primary">tuf</name>
    <name type="ordered locus">LGAS_1168</name>
</gene>
<keyword id="KW-0963">Cytoplasm</keyword>
<keyword id="KW-0251">Elongation factor</keyword>
<keyword id="KW-0342">GTP-binding</keyword>
<keyword id="KW-0378">Hydrolase</keyword>
<keyword id="KW-0460">Magnesium</keyword>
<keyword id="KW-0479">Metal-binding</keyword>
<keyword id="KW-0547">Nucleotide-binding</keyword>
<keyword id="KW-0648">Protein biosynthesis</keyword>
<reference key="1">
    <citation type="journal article" date="2006" name="Proc. Natl. Acad. Sci. U.S.A.">
        <title>Comparative genomics of the lactic acid bacteria.</title>
        <authorList>
            <person name="Makarova K.S."/>
            <person name="Slesarev A."/>
            <person name="Wolf Y.I."/>
            <person name="Sorokin A."/>
            <person name="Mirkin B."/>
            <person name="Koonin E.V."/>
            <person name="Pavlov A."/>
            <person name="Pavlova N."/>
            <person name="Karamychev V."/>
            <person name="Polouchine N."/>
            <person name="Shakhova V."/>
            <person name="Grigoriev I."/>
            <person name="Lou Y."/>
            <person name="Rohksar D."/>
            <person name="Lucas S."/>
            <person name="Huang K."/>
            <person name="Goodstein D.M."/>
            <person name="Hawkins T."/>
            <person name="Plengvidhya V."/>
            <person name="Welker D."/>
            <person name="Hughes J."/>
            <person name="Goh Y."/>
            <person name="Benson A."/>
            <person name="Baldwin K."/>
            <person name="Lee J.-H."/>
            <person name="Diaz-Muniz I."/>
            <person name="Dosti B."/>
            <person name="Smeianov V."/>
            <person name="Wechter W."/>
            <person name="Barabote R."/>
            <person name="Lorca G."/>
            <person name="Altermann E."/>
            <person name="Barrangou R."/>
            <person name="Ganesan B."/>
            <person name="Xie Y."/>
            <person name="Rawsthorne H."/>
            <person name="Tamir D."/>
            <person name="Parker C."/>
            <person name="Breidt F."/>
            <person name="Broadbent J.R."/>
            <person name="Hutkins R."/>
            <person name="O'Sullivan D."/>
            <person name="Steele J."/>
            <person name="Unlu G."/>
            <person name="Saier M.H. Jr."/>
            <person name="Klaenhammer T."/>
            <person name="Richardson P."/>
            <person name="Kozyavkin S."/>
            <person name="Weimer B.C."/>
            <person name="Mills D.A."/>
        </authorList>
    </citation>
    <scope>NUCLEOTIDE SEQUENCE [LARGE SCALE GENOMIC DNA]</scope>
    <source>
        <strain>ATCC 33323 / DSM 20243 / BCRC 14619 / CIP 102991 / JCM 1131 / KCTC 3163 / NCIMB 11718 / NCTC 13722 / AM63</strain>
    </source>
</reference>
<protein>
    <recommendedName>
        <fullName evidence="2">Elongation factor Tu</fullName>
        <shortName evidence="2">EF-Tu</shortName>
        <ecNumber evidence="2">3.6.5.3</ecNumber>
    </recommendedName>
</protein>
<comment type="function">
    <text evidence="2">GTP hydrolase that promotes the GTP-dependent binding of aminoacyl-tRNA to the A-site of ribosomes during protein biosynthesis.</text>
</comment>
<comment type="catalytic activity">
    <reaction evidence="2">
        <text>GTP + H2O = GDP + phosphate + H(+)</text>
        <dbReference type="Rhea" id="RHEA:19669"/>
        <dbReference type="ChEBI" id="CHEBI:15377"/>
        <dbReference type="ChEBI" id="CHEBI:15378"/>
        <dbReference type="ChEBI" id="CHEBI:37565"/>
        <dbReference type="ChEBI" id="CHEBI:43474"/>
        <dbReference type="ChEBI" id="CHEBI:58189"/>
        <dbReference type="EC" id="3.6.5.3"/>
    </reaction>
    <physiologicalReaction direction="left-to-right" evidence="2">
        <dbReference type="Rhea" id="RHEA:19670"/>
    </physiologicalReaction>
</comment>
<comment type="subunit">
    <text evidence="2">Monomer.</text>
</comment>
<comment type="subcellular location">
    <subcellularLocation>
        <location evidence="2">Cytoplasm</location>
    </subcellularLocation>
</comment>
<comment type="similarity">
    <text evidence="2">Belongs to the TRAFAC class translation factor GTPase superfamily. Classic translation factor GTPase family. EF-Tu/EF-1A subfamily.</text>
</comment>
<comment type="sequence caution" evidence="3">
    <conflict type="erroneous initiation">
        <sequence resource="EMBL-CDS" id="ABJ60537"/>
    </conflict>
</comment>
<accession>Q042T5</accession>